<gene>
    <name evidence="1" type="primary">rpmC</name>
    <name type="ordered locus">GDI3396</name>
    <name type="ordered locus">Gdia_2974</name>
</gene>
<sequence length="79" mass="8630">MAKATKPADLRAKTAEELEALLIDLKREQFNLRFQRATGQNEGQARVRTVRREIARVKTIASQALKKNAVGAGAPAAKS</sequence>
<proteinExistence type="inferred from homology"/>
<feature type="chain" id="PRO_1000079888" description="Large ribosomal subunit protein uL29">
    <location>
        <begin position="1"/>
        <end position="79"/>
    </location>
</feature>
<feature type="sequence conflict" description="In Ref. 2; ACI52704." evidence="2" ref="2">
    <original>V</original>
    <variation>A</variation>
    <location>
        <position position="70"/>
    </location>
</feature>
<evidence type="ECO:0000255" key="1">
    <source>
        <dbReference type="HAMAP-Rule" id="MF_00374"/>
    </source>
</evidence>
<evidence type="ECO:0000305" key="2"/>
<accession>A9H3N9</accession>
<accession>B5ZIH1</accession>
<comment type="similarity">
    <text evidence="1">Belongs to the universal ribosomal protein uL29 family.</text>
</comment>
<dbReference type="EMBL" id="AM889285">
    <property type="protein sequence ID" value="CAP57339.1"/>
    <property type="molecule type" value="Genomic_DNA"/>
</dbReference>
<dbReference type="EMBL" id="CP001189">
    <property type="protein sequence ID" value="ACI52704.1"/>
    <property type="molecule type" value="Genomic_DNA"/>
</dbReference>
<dbReference type="RefSeq" id="WP_012227946.1">
    <property type="nucleotide sequence ID" value="NC_010125.1"/>
</dbReference>
<dbReference type="RefSeq" id="WP_012554689.1">
    <property type="nucleotide sequence ID" value="NC_011365.1"/>
</dbReference>
<dbReference type="SMR" id="A9H3N9"/>
<dbReference type="STRING" id="272568.GDI3396"/>
<dbReference type="KEGG" id="gdi:GDI3396"/>
<dbReference type="KEGG" id="gdj:Gdia_2974"/>
<dbReference type="eggNOG" id="COG0255">
    <property type="taxonomic scope" value="Bacteria"/>
</dbReference>
<dbReference type="HOGENOM" id="CLU_158491_1_0_5"/>
<dbReference type="OrthoDB" id="9815192at2"/>
<dbReference type="Proteomes" id="UP000001176">
    <property type="component" value="Chromosome"/>
</dbReference>
<dbReference type="GO" id="GO:0022625">
    <property type="term" value="C:cytosolic large ribosomal subunit"/>
    <property type="evidence" value="ECO:0007669"/>
    <property type="project" value="TreeGrafter"/>
</dbReference>
<dbReference type="GO" id="GO:0003735">
    <property type="term" value="F:structural constituent of ribosome"/>
    <property type="evidence" value="ECO:0007669"/>
    <property type="project" value="InterPro"/>
</dbReference>
<dbReference type="GO" id="GO:0006412">
    <property type="term" value="P:translation"/>
    <property type="evidence" value="ECO:0007669"/>
    <property type="project" value="UniProtKB-UniRule"/>
</dbReference>
<dbReference type="CDD" id="cd00427">
    <property type="entry name" value="Ribosomal_L29_HIP"/>
    <property type="match status" value="1"/>
</dbReference>
<dbReference type="FunFam" id="1.10.287.310:FF:000001">
    <property type="entry name" value="50S ribosomal protein L29"/>
    <property type="match status" value="1"/>
</dbReference>
<dbReference type="Gene3D" id="1.10.287.310">
    <property type="match status" value="1"/>
</dbReference>
<dbReference type="HAMAP" id="MF_00374">
    <property type="entry name" value="Ribosomal_uL29"/>
    <property type="match status" value="1"/>
</dbReference>
<dbReference type="InterPro" id="IPR050063">
    <property type="entry name" value="Ribosomal_protein_uL29"/>
</dbReference>
<dbReference type="InterPro" id="IPR001854">
    <property type="entry name" value="Ribosomal_uL29"/>
</dbReference>
<dbReference type="InterPro" id="IPR036049">
    <property type="entry name" value="Ribosomal_uL29_sf"/>
</dbReference>
<dbReference type="NCBIfam" id="TIGR00012">
    <property type="entry name" value="L29"/>
    <property type="match status" value="1"/>
</dbReference>
<dbReference type="PANTHER" id="PTHR10916">
    <property type="entry name" value="60S RIBOSOMAL PROTEIN L35/50S RIBOSOMAL PROTEIN L29"/>
    <property type="match status" value="1"/>
</dbReference>
<dbReference type="PANTHER" id="PTHR10916:SF0">
    <property type="entry name" value="LARGE RIBOSOMAL SUBUNIT PROTEIN UL29C"/>
    <property type="match status" value="1"/>
</dbReference>
<dbReference type="Pfam" id="PF00831">
    <property type="entry name" value="Ribosomal_L29"/>
    <property type="match status" value="1"/>
</dbReference>
<dbReference type="SUPFAM" id="SSF46561">
    <property type="entry name" value="Ribosomal protein L29 (L29p)"/>
    <property type="match status" value="1"/>
</dbReference>
<protein>
    <recommendedName>
        <fullName evidence="1">Large ribosomal subunit protein uL29</fullName>
    </recommendedName>
    <alternativeName>
        <fullName evidence="2">50S ribosomal protein L29</fullName>
    </alternativeName>
</protein>
<keyword id="KW-1185">Reference proteome</keyword>
<keyword id="KW-0687">Ribonucleoprotein</keyword>
<keyword id="KW-0689">Ribosomal protein</keyword>
<organism>
    <name type="scientific">Gluconacetobacter diazotrophicus (strain ATCC 49037 / DSM 5601 / CCUG 37298 / CIP 103539 / LMG 7603 / PAl5)</name>
    <dbReference type="NCBI Taxonomy" id="272568"/>
    <lineage>
        <taxon>Bacteria</taxon>
        <taxon>Pseudomonadati</taxon>
        <taxon>Pseudomonadota</taxon>
        <taxon>Alphaproteobacteria</taxon>
        <taxon>Acetobacterales</taxon>
        <taxon>Acetobacteraceae</taxon>
        <taxon>Gluconacetobacter</taxon>
    </lineage>
</organism>
<reference key="1">
    <citation type="journal article" date="2009" name="BMC Genomics">
        <title>Complete genome sequence of the sugarcane nitrogen-fixing endophyte Gluconacetobacter diazotrophicus Pal5.</title>
        <authorList>
            <person name="Bertalan M."/>
            <person name="Albano R."/>
            <person name="de Padua V."/>
            <person name="Rouws L."/>
            <person name="Rojas C."/>
            <person name="Hemerly A."/>
            <person name="Teixeira K."/>
            <person name="Schwab S."/>
            <person name="Araujo J."/>
            <person name="Oliveira A."/>
            <person name="Franca L."/>
            <person name="Magalhaes V."/>
            <person name="Alqueres S."/>
            <person name="Cardoso A."/>
            <person name="Almeida W."/>
            <person name="Loureiro M.M."/>
            <person name="Nogueira E."/>
            <person name="Cidade D."/>
            <person name="Oliveira D."/>
            <person name="Simao T."/>
            <person name="Macedo J."/>
            <person name="Valadao A."/>
            <person name="Dreschsel M."/>
            <person name="Freitas F."/>
            <person name="Vidal M."/>
            <person name="Guedes H."/>
            <person name="Rodrigues E."/>
            <person name="Meneses C."/>
            <person name="Brioso P."/>
            <person name="Pozzer L."/>
            <person name="Figueiredo D."/>
            <person name="Montano H."/>
            <person name="Junior J."/>
            <person name="de Souza Filho G."/>
            <person name="Martin Quintana Flores V."/>
            <person name="Ferreira B."/>
            <person name="Branco A."/>
            <person name="Gonzalez P."/>
            <person name="Guillobel H."/>
            <person name="Lemos M."/>
            <person name="Seibel L."/>
            <person name="Macedo J."/>
            <person name="Alves-Ferreira M."/>
            <person name="Sachetto-Martins G."/>
            <person name="Coelho A."/>
            <person name="Santos E."/>
            <person name="Amaral G."/>
            <person name="Neves A."/>
            <person name="Pacheco A.B."/>
            <person name="Carvalho D."/>
            <person name="Lery L."/>
            <person name="Bisch P."/>
            <person name="Rossle S.C."/>
            <person name="Urmenyi T."/>
            <person name="Rael Pereira A."/>
            <person name="Silva R."/>
            <person name="Rondinelli E."/>
            <person name="von Kruger W."/>
            <person name="Martins O."/>
            <person name="Baldani J.I."/>
            <person name="Ferreira P.C."/>
        </authorList>
    </citation>
    <scope>NUCLEOTIDE SEQUENCE [LARGE SCALE GENOMIC DNA]</scope>
    <source>
        <strain>ATCC 49037 / DSM 5601 / CCUG 37298 / CIP 103539 / LMG 7603 / PAl5</strain>
    </source>
</reference>
<reference key="2">
    <citation type="journal article" date="2010" name="Stand. Genomic Sci.">
        <title>Two genome sequences of the same bacterial strain, Gluconacetobacter diazotrophicus PAl 5, suggest a new standard in genome sequence submission.</title>
        <authorList>
            <person name="Giongo A."/>
            <person name="Tyler H.L."/>
            <person name="Zipperer U.N."/>
            <person name="Triplett E.W."/>
        </authorList>
    </citation>
    <scope>NUCLEOTIDE SEQUENCE [LARGE SCALE GENOMIC DNA]</scope>
    <source>
        <strain>ATCC 49037 / DSM 5601 / CCUG 37298 / CIP 103539 / LMG 7603 / PAl5</strain>
    </source>
</reference>
<name>RL29_GLUDA</name>